<protein>
    <recommendedName>
        <fullName evidence="1">Cytochrome c-552</fullName>
        <ecNumber evidence="1">1.7.2.2</ecNumber>
    </recommendedName>
    <alternativeName>
        <fullName evidence="1">Ammonia-forming cytochrome c nitrite reductase</fullName>
        <shortName evidence="1">Cytochrome c nitrite reductase</shortName>
    </alternativeName>
</protein>
<feature type="signal peptide" evidence="1">
    <location>
        <begin position="1"/>
        <end position="26"/>
    </location>
</feature>
<feature type="chain" id="PRO_1000138214" description="Cytochrome c-552">
    <location>
        <begin position="27"/>
        <end position="478"/>
    </location>
</feature>
<feature type="binding site" description="axial binding residue" evidence="1">
    <location>
        <position position="94"/>
    </location>
    <ligand>
        <name>heme c</name>
        <dbReference type="ChEBI" id="CHEBI:61717"/>
        <label>3</label>
    </ligand>
    <ligandPart>
        <name>Fe</name>
        <dbReference type="ChEBI" id="CHEBI:18248"/>
    </ligandPart>
</feature>
<feature type="binding site" description="covalent" evidence="1">
    <location>
        <position position="122"/>
    </location>
    <ligand>
        <name>heme</name>
        <dbReference type="ChEBI" id="CHEBI:30413"/>
        <label>1</label>
    </ligand>
</feature>
<feature type="binding site" description="covalent" evidence="1">
    <location>
        <position position="125"/>
    </location>
    <ligand>
        <name>heme</name>
        <dbReference type="ChEBI" id="CHEBI:30413"/>
        <label>1</label>
    </ligand>
</feature>
<feature type="binding site" description="axial binding residue" evidence="1">
    <location>
        <position position="126"/>
    </location>
    <ligand>
        <name>heme</name>
        <dbReference type="ChEBI" id="CHEBI:30413"/>
        <label>1</label>
    </ligand>
    <ligandPart>
        <name>Fe</name>
        <dbReference type="ChEBI" id="CHEBI:18248"/>
    </ligandPart>
</feature>
<feature type="binding site" description="covalent" evidence="1">
    <location>
        <position position="160"/>
    </location>
    <ligand>
        <name>heme c</name>
        <dbReference type="ChEBI" id="CHEBI:61717"/>
        <label>2</label>
    </ligand>
</feature>
<feature type="binding site" description="covalent" evidence="1">
    <location>
        <position position="163"/>
    </location>
    <ligand>
        <name>heme c</name>
        <dbReference type="ChEBI" id="CHEBI:61717"/>
        <label>2</label>
    </ligand>
</feature>
<feature type="binding site" description="axial binding residue" evidence="1">
    <location>
        <position position="164"/>
    </location>
    <ligand>
        <name>heme c</name>
        <dbReference type="ChEBI" id="CHEBI:61717"/>
        <label>2</label>
    </ligand>
    <ligandPart>
        <name>Fe</name>
        <dbReference type="ChEBI" id="CHEBI:18248"/>
    </ligandPart>
</feature>
<feature type="binding site" description="covalent" evidence="1">
    <location>
        <position position="209"/>
    </location>
    <ligand>
        <name>heme c</name>
        <dbReference type="ChEBI" id="CHEBI:61717"/>
        <label>3</label>
    </ligand>
</feature>
<feature type="binding site" description="covalent" evidence="1">
    <location>
        <position position="212"/>
    </location>
    <ligand>
        <name>heme c</name>
        <dbReference type="ChEBI" id="CHEBI:61717"/>
        <label>3</label>
    </ligand>
</feature>
<feature type="binding site" description="axial binding residue" evidence="1">
    <location>
        <position position="213"/>
    </location>
    <ligand>
        <name>heme c</name>
        <dbReference type="ChEBI" id="CHEBI:61717"/>
        <label>3</label>
    </ligand>
    <ligandPart>
        <name>Fe</name>
        <dbReference type="ChEBI" id="CHEBI:18248"/>
    </ligandPart>
</feature>
<feature type="binding site" evidence="1">
    <location>
        <position position="215"/>
    </location>
    <ligand>
        <name>Ca(2+)</name>
        <dbReference type="ChEBI" id="CHEBI:29108"/>
    </ligand>
</feature>
<feature type="binding site" evidence="1">
    <location>
        <position position="216"/>
    </location>
    <ligand>
        <name>Ca(2+)</name>
        <dbReference type="ChEBI" id="CHEBI:29108"/>
    </ligand>
</feature>
<feature type="binding site" evidence="1">
    <location>
        <position position="216"/>
    </location>
    <ligand>
        <name>substrate</name>
    </ligand>
</feature>
<feature type="binding site" evidence="1">
    <location>
        <position position="261"/>
    </location>
    <ligand>
        <name>Ca(2+)</name>
        <dbReference type="ChEBI" id="CHEBI:29108"/>
    </ligand>
</feature>
<feature type="binding site" evidence="1">
    <location>
        <position position="263"/>
    </location>
    <ligand>
        <name>Ca(2+)</name>
        <dbReference type="ChEBI" id="CHEBI:29108"/>
    </ligand>
</feature>
<feature type="binding site" evidence="1">
    <location>
        <position position="264"/>
    </location>
    <ligand>
        <name>substrate</name>
    </ligand>
</feature>
<feature type="binding site" description="axial binding residue" evidence="1">
    <location>
        <position position="275"/>
    </location>
    <ligand>
        <name>heme c</name>
        <dbReference type="ChEBI" id="CHEBI:61717"/>
        <label>5</label>
    </ligand>
    <ligandPart>
        <name>Fe</name>
        <dbReference type="ChEBI" id="CHEBI:18248"/>
    </ligandPart>
</feature>
<feature type="binding site" description="covalent" evidence="1">
    <location>
        <position position="282"/>
    </location>
    <ligand>
        <name>heme c</name>
        <dbReference type="ChEBI" id="CHEBI:61717"/>
        <label>4</label>
    </ligand>
</feature>
<feature type="binding site" description="covalent" evidence="1">
    <location>
        <position position="285"/>
    </location>
    <ligand>
        <name>heme c</name>
        <dbReference type="ChEBI" id="CHEBI:61717"/>
        <label>4</label>
    </ligand>
</feature>
<feature type="binding site" description="axial binding residue" evidence="1">
    <location>
        <position position="286"/>
    </location>
    <ligand>
        <name>heme c</name>
        <dbReference type="ChEBI" id="CHEBI:61717"/>
        <label>4</label>
    </ligand>
    <ligandPart>
        <name>Fe</name>
        <dbReference type="ChEBI" id="CHEBI:18248"/>
    </ligandPart>
</feature>
<feature type="binding site" description="axial binding residue" evidence="1">
    <location>
        <position position="301"/>
    </location>
    <ligand>
        <name>heme c</name>
        <dbReference type="ChEBI" id="CHEBI:61717"/>
        <label>2</label>
    </ligand>
    <ligandPart>
        <name>Fe</name>
        <dbReference type="ChEBI" id="CHEBI:18248"/>
    </ligandPart>
</feature>
<feature type="binding site" description="covalent" evidence="1">
    <location>
        <position position="314"/>
    </location>
    <ligand>
        <name>heme c</name>
        <dbReference type="ChEBI" id="CHEBI:61717"/>
        <label>5</label>
    </ligand>
</feature>
<feature type="binding site" description="covalent" evidence="1">
    <location>
        <position position="317"/>
    </location>
    <ligand>
        <name>heme c</name>
        <dbReference type="ChEBI" id="CHEBI:61717"/>
        <label>5</label>
    </ligand>
</feature>
<feature type="binding site" description="axial binding residue" evidence="1">
    <location>
        <position position="318"/>
    </location>
    <ligand>
        <name>heme c</name>
        <dbReference type="ChEBI" id="CHEBI:61717"/>
        <label>5</label>
    </ligand>
    <ligandPart>
        <name>Fe</name>
        <dbReference type="ChEBI" id="CHEBI:18248"/>
    </ligandPart>
</feature>
<feature type="binding site" description="axial binding residue" evidence="1">
    <location>
        <position position="393"/>
    </location>
    <ligand>
        <name>heme c</name>
        <dbReference type="ChEBI" id="CHEBI:61717"/>
        <label>4</label>
    </ligand>
    <ligandPart>
        <name>Fe</name>
        <dbReference type="ChEBI" id="CHEBI:18248"/>
    </ligandPart>
</feature>
<gene>
    <name evidence="1" type="primary">nrfA</name>
    <name type="ordered locus">ECUMN_4606</name>
</gene>
<dbReference type="EC" id="1.7.2.2" evidence="1"/>
<dbReference type="EMBL" id="CU928163">
    <property type="protein sequence ID" value="CAR15721.1"/>
    <property type="molecule type" value="Genomic_DNA"/>
</dbReference>
<dbReference type="RefSeq" id="WP_000196882.1">
    <property type="nucleotide sequence ID" value="NC_011751.1"/>
</dbReference>
<dbReference type="RefSeq" id="YP_002415211.1">
    <property type="nucleotide sequence ID" value="NC_011751.1"/>
</dbReference>
<dbReference type="SMR" id="B7NG13"/>
<dbReference type="STRING" id="585056.ECUMN_4606"/>
<dbReference type="KEGG" id="eum:ECUMN_4606"/>
<dbReference type="PATRIC" id="fig|585056.7.peg.4770"/>
<dbReference type="HOGENOM" id="CLU_035040_1_0_6"/>
<dbReference type="UniPathway" id="UPA00653"/>
<dbReference type="Proteomes" id="UP000007097">
    <property type="component" value="Chromosome"/>
</dbReference>
<dbReference type="GO" id="GO:0030288">
    <property type="term" value="C:outer membrane-bounded periplasmic space"/>
    <property type="evidence" value="ECO:0007669"/>
    <property type="project" value="TreeGrafter"/>
</dbReference>
<dbReference type="GO" id="GO:0005509">
    <property type="term" value="F:calcium ion binding"/>
    <property type="evidence" value="ECO:0007669"/>
    <property type="project" value="UniProtKB-UniRule"/>
</dbReference>
<dbReference type="GO" id="GO:0020037">
    <property type="term" value="F:heme binding"/>
    <property type="evidence" value="ECO:0007669"/>
    <property type="project" value="InterPro"/>
</dbReference>
<dbReference type="GO" id="GO:0005506">
    <property type="term" value="F:iron ion binding"/>
    <property type="evidence" value="ECO:0007669"/>
    <property type="project" value="UniProtKB-UniRule"/>
</dbReference>
<dbReference type="GO" id="GO:0042279">
    <property type="term" value="F:nitrite reductase (cytochrome, ammonia-forming) activity"/>
    <property type="evidence" value="ECO:0007669"/>
    <property type="project" value="UniProtKB-UniRule"/>
</dbReference>
<dbReference type="GO" id="GO:0019645">
    <property type="term" value="P:anaerobic electron transport chain"/>
    <property type="evidence" value="ECO:0007669"/>
    <property type="project" value="TreeGrafter"/>
</dbReference>
<dbReference type="GO" id="GO:0042128">
    <property type="term" value="P:nitrate assimilation"/>
    <property type="evidence" value="ECO:0007669"/>
    <property type="project" value="UniProtKB-UniRule"/>
</dbReference>
<dbReference type="CDD" id="cd00548">
    <property type="entry name" value="NrfA-like"/>
    <property type="match status" value="1"/>
</dbReference>
<dbReference type="FunFam" id="1.10.1130.10:FF:000002">
    <property type="entry name" value="Cytochrome c-552"/>
    <property type="match status" value="1"/>
</dbReference>
<dbReference type="FunFam" id="1.20.140.10:FF:000014">
    <property type="entry name" value="Cytochrome c-552"/>
    <property type="match status" value="1"/>
</dbReference>
<dbReference type="Gene3D" id="1.20.140.10">
    <property type="entry name" value="Butyryl-CoA Dehydrogenase, subunit A, domain 3"/>
    <property type="match status" value="1"/>
</dbReference>
<dbReference type="Gene3D" id="1.10.1130.10">
    <property type="entry name" value="Flavocytochrome C3, Chain A"/>
    <property type="match status" value="1"/>
</dbReference>
<dbReference type="HAMAP" id="MF_01182">
    <property type="entry name" value="Cytochrom_C552"/>
    <property type="match status" value="1"/>
</dbReference>
<dbReference type="InterPro" id="IPR003321">
    <property type="entry name" value="Cyt_c552"/>
</dbReference>
<dbReference type="InterPro" id="IPR017570">
    <property type="entry name" value="Cyt_c_NO2Rdtase_formate-dep"/>
</dbReference>
<dbReference type="InterPro" id="IPR036280">
    <property type="entry name" value="Multihaem_cyt_sf"/>
</dbReference>
<dbReference type="NCBIfam" id="TIGR03152">
    <property type="entry name" value="cyto_c552_HCOOH"/>
    <property type="match status" value="1"/>
</dbReference>
<dbReference type="NCBIfam" id="NF008339">
    <property type="entry name" value="PRK11125.1"/>
    <property type="match status" value="1"/>
</dbReference>
<dbReference type="PANTHER" id="PTHR30633:SF0">
    <property type="entry name" value="CYTOCHROME C-552"/>
    <property type="match status" value="1"/>
</dbReference>
<dbReference type="PANTHER" id="PTHR30633">
    <property type="entry name" value="CYTOCHROME C-552 RESPIRATORY NITRITE REDUCTASE"/>
    <property type="match status" value="1"/>
</dbReference>
<dbReference type="Pfam" id="PF02335">
    <property type="entry name" value="Cytochrom_C552"/>
    <property type="match status" value="1"/>
</dbReference>
<dbReference type="PIRSF" id="PIRSF000243">
    <property type="entry name" value="Cyt_c552"/>
    <property type="match status" value="1"/>
</dbReference>
<dbReference type="SUPFAM" id="SSF48695">
    <property type="entry name" value="Multiheme cytochromes"/>
    <property type="match status" value="1"/>
</dbReference>
<dbReference type="PROSITE" id="PS51008">
    <property type="entry name" value="MULTIHEME_CYTC"/>
    <property type="match status" value="1"/>
</dbReference>
<comment type="function">
    <text evidence="1">Catalyzes the reduction of nitrite to ammonia, consuming six electrons in the process.</text>
</comment>
<comment type="catalytic activity">
    <reaction evidence="1">
        <text>6 Fe(III)-[cytochrome c] + NH4(+) + 2 H2O = 6 Fe(II)-[cytochrome c] + nitrite + 8 H(+)</text>
        <dbReference type="Rhea" id="RHEA:13089"/>
        <dbReference type="Rhea" id="RHEA-COMP:10350"/>
        <dbReference type="Rhea" id="RHEA-COMP:14399"/>
        <dbReference type="ChEBI" id="CHEBI:15377"/>
        <dbReference type="ChEBI" id="CHEBI:15378"/>
        <dbReference type="ChEBI" id="CHEBI:16301"/>
        <dbReference type="ChEBI" id="CHEBI:28938"/>
        <dbReference type="ChEBI" id="CHEBI:29033"/>
        <dbReference type="ChEBI" id="CHEBI:29034"/>
        <dbReference type="EC" id="1.7.2.2"/>
    </reaction>
</comment>
<comment type="cofactor">
    <cofactor evidence="1">
        <name>Ca(2+)</name>
        <dbReference type="ChEBI" id="CHEBI:29108"/>
    </cofactor>
    <text evidence="1">Binds 1 Ca(2+) ion per monomer.</text>
</comment>
<comment type="cofactor">
    <cofactor evidence="1">
        <name>heme c</name>
        <dbReference type="ChEBI" id="CHEBI:61717"/>
    </cofactor>
    <text evidence="1">Binds 5 heme c groups covalently per monomer.</text>
</comment>
<comment type="pathway">
    <text evidence="1">Nitrogen metabolism; nitrate reduction (assimilation).</text>
</comment>
<comment type="subcellular location">
    <subcellularLocation>
        <location evidence="1">Periplasm</location>
    </subcellularLocation>
</comment>
<comment type="similarity">
    <text evidence="1">Belongs to the cytochrome c-552 family.</text>
</comment>
<sequence>MTRIKINARRIFSLLIPFFFFTSVHAEQTATPAKPVTVEAKNETFAPQHPDQYLSWKATSEQSERVDALAEDPRLVILWAGYPFSRDYNKPRGHAFAVTDVRETLRTGAPKNAEDGPLPMACWSCKSPDVARLIQKDGEDGYFHGKWARGGPEIVNNLGCADCHNTASPEFAKGKPELTLSRPYAARAMEAIGKPFEKAGRFDQQSMVCGQCHVEYYFDGKNKAVKFPWDDGMKVENMEQYYDKIAFSDWTNSLSKTPMLKAQHPEYETWTAGIHGKNNVTCIDCHMPKVQNAEGKLYTDHKIGNPFDNFAQTCANCHTQDKAALQKVVAERKQSINDLKIKVEDQLVHAHFEAKAALDAGATEAEMKPIQDDIRHAQWRWDLAIASHGIHMHAPEEGLRMLGTAMDKAADARTKLARLLATKGITHEIQIPDISTKEKAQQAIGLNMEQIKAEKQDFIKTVIPQWEEQERKNGLLSQ</sequence>
<evidence type="ECO:0000255" key="1">
    <source>
        <dbReference type="HAMAP-Rule" id="MF_01182"/>
    </source>
</evidence>
<name>NRFA_ECOLU</name>
<proteinExistence type="inferred from homology"/>
<keyword id="KW-0106">Calcium</keyword>
<keyword id="KW-0249">Electron transport</keyword>
<keyword id="KW-0349">Heme</keyword>
<keyword id="KW-0408">Iron</keyword>
<keyword id="KW-0479">Metal-binding</keyword>
<keyword id="KW-0560">Oxidoreductase</keyword>
<keyword id="KW-0574">Periplasm</keyword>
<keyword id="KW-0732">Signal</keyword>
<keyword id="KW-0813">Transport</keyword>
<organism>
    <name type="scientific">Escherichia coli O17:K52:H18 (strain UMN026 / ExPEC)</name>
    <dbReference type="NCBI Taxonomy" id="585056"/>
    <lineage>
        <taxon>Bacteria</taxon>
        <taxon>Pseudomonadati</taxon>
        <taxon>Pseudomonadota</taxon>
        <taxon>Gammaproteobacteria</taxon>
        <taxon>Enterobacterales</taxon>
        <taxon>Enterobacteriaceae</taxon>
        <taxon>Escherichia</taxon>
    </lineage>
</organism>
<reference key="1">
    <citation type="journal article" date="2009" name="PLoS Genet.">
        <title>Organised genome dynamics in the Escherichia coli species results in highly diverse adaptive paths.</title>
        <authorList>
            <person name="Touchon M."/>
            <person name="Hoede C."/>
            <person name="Tenaillon O."/>
            <person name="Barbe V."/>
            <person name="Baeriswyl S."/>
            <person name="Bidet P."/>
            <person name="Bingen E."/>
            <person name="Bonacorsi S."/>
            <person name="Bouchier C."/>
            <person name="Bouvet O."/>
            <person name="Calteau A."/>
            <person name="Chiapello H."/>
            <person name="Clermont O."/>
            <person name="Cruveiller S."/>
            <person name="Danchin A."/>
            <person name="Diard M."/>
            <person name="Dossat C."/>
            <person name="Karoui M.E."/>
            <person name="Frapy E."/>
            <person name="Garry L."/>
            <person name="Ghigo J.M."/>
            <person name="Gilles A.M."/>
            <person name="Johnson J."/>
            <person name="Le Bouguenec C."/>
            <person name="Lescat M."/>
            <person name="Mangenot S."/>
            <person name="Martinez-Jehanne V."/>
            <person name="Matic I."/>
            <person name="Nassif X."/>
            <person name="Oztas S."/>
            <person name="Petit M.A."/>
            <person name="Pichon C."/>
            <person name="Rouy Z."/>
            <person name="Ruf C.S."/>
            <person name="Schneider D."/>
            <person name="Tourret J."/>
            <person name="Vacherie B."/>
            <person name="Vallenet D."/>
            <person name="Medigue C."/>
            <person name="Rocha E.P.C."/>
            <person name="Denamur E."/>
        </authorList>
    </citation>
    <scope>NUCLEOTIDE SEQUENCE [LARGE SCALE GENOMIC DNA]</scope>
    <source>
        <strain>UMN026 / ExPEC</strain>
    </source>
</reference>
<accession>B7NG13</accession>